<proteinExistence type="evidence at transcript level"/>
<name>IFT22_XENTR</name>
<keyword id="KW-0342">GTP-binding</keyword>
<keyword id="KW-0547">Nucleotide-binding</keyword>
<keyword id="KW-1185">Reference proteome</keyword>
<feature type="chain" id="PRO_0000253738" description="Intraflagellar transport protein 22 homolog">
    <location>
        <begin position="1"/>
        <end position="184"/>
    </location>
</feature>
<feature type="binding site" evidence="1">
    <location>
        <begin position="10"/>
        <end position="17"/>
    </location>
    <ligand>
        <name>GTP</name>
        <dbReference type="ChEBI" id="CHEBI:37565"/>
    </ligand>
</feature>
<feature type="binding site" evidence="1">
    <location>
        <begin position="62"/>
        <end position="66"/>
    </location>
    <ligand>
        <name>GTP</name>
        <dbReference type="ChEBI" id="CHEBI:37565"/>
    </ligand>
</feature>
<feature type="binding site" evidence="1">
    <location>
        <begin position="122"/>
        <end position="125"/>
    </location>
    <ligand>
        <name>GTP</name>
        <dbReference type="ChEBI" id="CHEBI:37565"/>
    </ligand>
</feature>
<dbReference type="EMBL" id="CR848650">
    <property type="protein sequence ID" value="CAJ83977.1"/>
    <property type="molecule type" value="mRNA"/>
</dbReference>
<dbReference type="EMBL" id="BC087980">
    <property type="protein sequence ID" value="AAH87980.1"/>
    <property type="molecule type" value="mRNA"/>
</dbReference>
<dbReference type="RefSeq" id="NP_001011271.1">
    <property type="nucleotide sequence ID" value="NM_001011271.1"/>
</dbReference>
<dbReference type="RefSeq" id="XP_012812305.1">
    <property type="nucleotide sequence ID" value="XM_012956851.3"/>
</dbReference>
<dbReference type="RefSeq" id="XP_012812306.1">
    <property type="nucleotide sequence ID" value="XM_012956852.3"/>
</dbReference>
<dbReference type="RefSeq" id="XP_012812307.1">
    <property type="nucleotide sequence ID" value="XM_012956853.3"/>
</dbReference>
<dbReference type="RefSeq" id="XP_012812308.1">
    <property type="nucleotide sequence ID" value="XM_012956854.3"/>
</dbReference>
<dbReference type="RefSeq" id="XP_017946692.1">
    <property type="nucleotide sequence ID" value="XM_018091203.2"/>
</dbReference>
<dbReference type="RefSeq" id="XP_017946693.1">
    <property type="nucleotide sequence ID" value="XM_018091204.2"/>
</dbReference>
<dbReference type="SMR" id="Q5M8K8"/>
<dbReference type="FunCoup" id="Q5M8K8">
    <property type="interactions" value="412"/>
</dbReference>
<dbReference type="STRING" id="8364.ENSXETP00000054462"/>
<dbReference type="PaxDb" id="8364-ENSXETP00000027320"/>
<dbReference type="DNASU" id="496722"/>
<dbReference type="GeneID" id="496722"/>
<dbReference type="KEGG" id="xtr:496722"/>
<dbReference type="AGR" id="Xenbase:XB-GENE-977482"/>
<dbReference type="CTD" id="64792"/>
<dbReference type="Xenbase" id="XB-GENE-977482">
    <property type="gene designation" value="ift22"/>
</dbReference>
<dbReference type="eggNOG" id="ENOG502RXD4">
    <property type="taxonomic scope" value="Eukaryota"/>
</dbReference>
<dbReference type="HOGENOM" id="CLU_096604_0_0_1"/>
<dbReference type="InParanoid" id="Q5M8K8"/>
<dbReference type="OMA" id="NERHDQE"/>
<dbReference type="OrthoDB" id="275177at2759"/>
<dbReference type="PhylomeDB" id="Q5M8K8"/>
<dbReference type="TreeFam" id="TF313208"/>
<dbReference type="Proteomes" id="UP000008143">
    <property type="component" value="Chromosome 2"/>
</dbReference>
<dbReference type="Bgee" id="ENSXETG00000012497">
    <property type="expression patterns" value="Expressed in testis and 15 other cell types or tissues"/>
</dbReference>
<dbReference type="GO" id="GO:0030992">
    <property type="term" value="C:intraciliary transport particle B"/>
    <property type="evidence" value="ECO:0000250"/>
    <property type="project" value="UniProtKB"/>
</dbReference>
<dbReference type="GO" id="GO:0005525">
    <property type="term" value="F:GTP binding"/>
    <property type="evidence" value="ECO:0007669"/>
    <property type="project" value="UniProtKB-KW"/>
</dbReference>
<dbReference type="CDD" id="cd00882">
    <property type="entry name" value="Ras_like_GTPase"/>
    <property type="match status" value="1"/>
</dbReference>
<dbReference type="FunFam" id="3.40.50.300:FF:001100">
    <property type="entry name" value="intraflagellar transport protein 22 homolog"/>
    <property type="match status" value="1"/>
</dbReference>
<dbReference type="Gene3D" id="3.40.50.300">
    <property type="entry name" value="P-loop containing nucleotide triphosphate hydrolases"/>
    <property type="match status" value="1"/>
</dbReference>
<dbReference type="InterPro" id="IPR027417">
    <property type="entry name" value="P-loop_NTPase"/>
</dbReference>
<dbReference type="PANTHER" id="PTHR24073">
    <property type="entry name" value="DRAB5-RELATED"/>
    <property type="match status" value="1"/>
</dbReference>
<dbReference type="Pfam" id="PF08477">
    <property type="entry name" value="Roc"/>
    <property type="match status" value="1"/>
</dbReference>
<dbReference type="SUPFAM" id="SSF52540">
    <property type="entry name" value="P-loop containing nucleoside triphosphate hydrolases"/>
    <property type="match status" value="1"/>
</dbReference>
<reference key="1">
    <citation type="submission" date="2006-06" db="EMBL/GenBank/DDBJ databases">
        <authorList>
            <consortium name="Sanger Xenopus tropicalis EST/cDNA project"/>
        </authorList>
    </citation>
    <scope>NUCLEOTIDE SEQUENCE [LARGE SCALE MRNA]</scope>
    <source>
        <tissue>Gastrula</tissue>
    </source>
</reference>
<reference key="2">
    <citation type="submission" date="2004-12" db="EMBL/GenBank/DDBJ databases">
        <authorList>
            <consortium name="NIH - Xenopus Gene Collection (XGC) project"/>
        </authorList>
    </citation>
    <scope>NUCLEOTIDE SEQUENCE [LARGE SCALE MRNA]</scope>
</reference>
<organism>
    <name type="scientific">Xenopus tropicalis</name>
    <name type="common">Western clawed frog</name>
    <name type="synonym">Silurana tropicalis</name>
    <dbReference type="NCBI Taxonomy" id="8364"/>
    <lineage>
        <taxon>Eukaryota</taxon>
        <taxon>Metazoa</taxon>
        <taxon>Chordata</taxon>
        <taxon>Craniata</taxon>
        <taxon>Vertebrata</taxon>
        <taxon>Euteleostomi</taxon>
        <taxon>Amphibia</taxon>
        <taxon>Batrachia</taxon>
        <taxon>Anura</taxon>
        <taxon>Pipoidea</taxon>
        <taxon>Pipidae</taxon>
        <taxon>Xenopodinae</taxon>
        <taxon>Xenopus</taxon>
        <taxon>Silurana</taxon>
    </lineage>
</organism>
<gene>
    <name type="primary">ift22</name>
    <name type="synonym">rabl5</name>
    <name type="ORF">TGas031j16.1</name>
</gene>
<sequence>MFKAKVLVVGPTESGKTILANFISDATETIGGEYNPTQGVRILEFECPNGNKGSSCEVELWDCGGDSKFESCWPVIMKDSHGVIIVFSADIPSHLKEIEMWHLNFIQKQRLQENRCLLIAHKKPGSGDERERLNLSPALAKLTLIYSNLEDDPEDVRMELMKYLRGIVSSLSESRDREEMSIIT</sequence>
<accession>Q5M8K8</accession>
<protein>
    <recommendedName>
        <fullName>Intraflagellar transport protein 22 homolog</fullName>
    </recommendedName>
    <alternativeName>
        <fullName>Rab-like protein 5</fullName>
    </alternativeName>
</protein>
<evidence type="ECO:0000250" key="1"/>
<evidence type="ECO:0000305" key="2"/>
<comment type="similarity">
    <text evidence="2">Belongs to the small GTPase superfamily. Rab family.</text>
</comment>